<feature type="chain" id="PRO_0000210681" description="Uncharacterized protein MPN_462">
    <location>
        <begin position="1"/>
        <end position="270"/>
    </location>
</feature>
<feature type="region of interest" description="Disordered" evidence="1">
    <location>
        <begin position="1"/>
        <end position="115"/>
    </location>
</feature>
<feature type="region of interest" description="Disordered" evidence="1">
    <location>
        <begin position="215"/>
        <end position="236"/>
    </location>
</feature>
<feature type="compositionally biased region" description="Basic and acidic residues" evidence="1">
    <location>
        <begin position="1"/>
        <end position="10"/>
    </location>
</feature>
<feature type="compositionally biased region" description="Low complexity" evidence="1">
    <location>
        <begin position="26"/>
        <end position="41"/>
    </location>
</feature>
<feature type="compositionally biased region" description="Low complexity" evidence="1">
    <location>
        <begin position="98"/>
        <end position="113"/>
    </location>
</feature>
<gene>
    <name type="ordered locus">MPN_462</name>
    <name type="ORF">H08_orf270</name>
    <name type="ORF">MP379</name>
</gene>
<organism>
    <name type="scientific">Mycoplasma pneumoniae (strain ATCC 29342 / M129 / Subtype 1)</name>
    <name type="common">Mycoplasmoides pneumoniae</name>
    <dbReference type="NCBI Taxonomy" id="272634"/>
    <lineage>
        <taxon>Bacteria</taxon>
        <taxon>Bacillati</taxon>
        <taxon>Mycoplasmatota</taxon>
        <taxon>Mycoplasmoidales</taxon>
        <taxon>Mycoplasmoidaceae</taxon>
        <taxon>Mycoplasmoides</taxon>
    </lineage>
</organism>
<comment type="similarity">
    <text evidence="2">Belongs to the adhesin P1 family.</text>
</comment>
<name>Y462_MYCPN</name>
<proteinExistence type="inferred from homology"/>
<accession>P75321</accession>
<sequence length="270" mass="29795">MFGLKVKDATVDSSKQSTESLKGEESSSSSTTSSTSTTQRGGSSGDTKVKALQVAVKKKSDSEDNGQIELETNNLANAPIKRGSNNNQQVQLKADDFGTSPSSSESGQSGTPTPWTPWLATEQIHKDLPKWSASILILYDAPYARNRTAIDRVDHLDPKVMTANYPPSWRTPKWNHHGLWDWKARDVLVQTTGFFNPRRHPDWFDQGQAVAENTQTGFDTDDTDNKKQGFRKQGEQSPAPIALPFEAYFANIGNLTWFGQALLVFGICLS</sequence>
<protein>
    <recommendedName>
        <fullName>Uncharacterized protein MPN_462</fullName>
    </recommendedName>
</protein>
<evidence type="ECO:0000256" key="1">
    <source>
        <dbReference type="SAM" id="MobiDB-lite"/>
    </source>
</evidence>
<evidence type="ECO:0000305" key="2"/>
<dbReference type="EMBL" id="U00089">
    <property type="protein sequence ID" value="AAB96027.1"/>
    <property type="molecule type" value="Genomic_DNA"/>
</dbReference>
<dbReference type="PIR" id="S73705">
    <property type="entry name" value="S73705"/>
</dbReference>
<dbReference type="RefSeq" id="NP_110150.1">
    <property type="nucleotide sequence ID" value="NC_000912.1"/>
</dbReference>
<dbReference type="SMR" id="P75321"/>
<dbReference type="IntAct" id="P75321">
    <property type="interactions" value="1"/>
</dbReference>
<dbReference type="STRING" id="272634.MPN_462"/>
<dbReference type="EnsemblBacteria" id="AAB96027">
    <property type="protein sequence ID" value="AAB96027"/>
    <property type="gene ID" value="MPN_462"/>
</dbReference>
<dbReference type="KEGG" id="mpn:MPN_462"/>
<dbReference type="PATRIC" id="fig|272634.6.peg.499"/>
<dbReference type="HOGENOM" id="CLU_053128_0_0_14"/>
<dbReference type="BioCyc" id="MPNE272634:G1GJ3-757-MONOMER"/>
<dbReference type="Proteomes" id="UP000000808">
    <property type="component" value="Chromosome"/>
</dbReference>
<dbReference type="InterPro" id="IPR022116">
    <property type="entry name" value="P1_N"/>
</dbReference>
<dbReference type="Pfam" id="PF12378">
    <property type="entry name" value="P1_N"/>
    <property type="match status" value="1"/>
</dbReference>
<keyword id="KW-1185">Reference proteome</keyword>
<reference key="1">
    <citation type="journal article" date="1996" name="Nucleic Acids Res.">
        <title>Complete sequence analysis of the genome of the bacterium Mycoplasma pneumoniae.</title>
        <authorList>
            <person name="Himmelreich R."/>
            <person name="Hilbert H."/>
            <person name="Plagens H."/>
            <person name="Pirkl E."/>
            <person name="Li B.-C."/>
            <person name="Herrmann R."/>
        </authorList>
    </citation>
    <scope>NUCLEOTIDE SEQUENCE [LARGE SCALE GENOMIC DNA]</scope>
    <source>
        <strain>ATCC 29342 / M129 / Subtype 1</strain>
    </source>
</reference>